<organism>
    <name type="scientific">Thermotoga maritima (strain ATCC 43589 / DSM 3109 / JCM 10099 / NBRC 100826 / MSB8)</name>
    <dbReference type="NCBI Taxonomy" id="243274"/>
    <lineage>
        <taxon>Bacteria</taxon>
        <taxon>Thermotogati</taxon>
        <taxon>Thermotogota</taxon>
        <taxon>Thermotogae</taxon>
        <taxon>Thermotogales</taxon>
        <taxon>Thermotogaceae</taxon>
        <taxon>Thermotoga</taxon>
    </lineage>
</organism>
<dbReference type="EC" id="3.6.1.-" evidence="1"/>
<dbReference type="EMBL" id="AE000512">
    <property type="protein sequence ID" value="AAD36783.1"/>
    <property type="molecule type" value="Genomic_DNA"/>
</dbReference>
<dbReference type="PIR" id="A72219">
    <property type="entry name" value="A72219"/>
</dbReference>
<dbReference type="RefSeq" id="NP_229516.1">
    <property type="nucleotide sequence ID" value="NC_000853.1"/>
</dbReference>
<dbReference type="RefSeq" id="WP_010865389.1">
    <property type="nucleotide sequence ID" value="NC_000853.1"/>
</dbReference>
<dbReference type="PDB" id="1U0L">
    <property type="method" value="X-ray"/>
    <property type="resolution" value="2.80 A"/>
    <property type="chains" value="A/B/C=1-295"/>
</dbReference>
<dbReference type="PDBsum" id="1U0L"/>
<dbReference type="SMR" id="Q9X242"/>
<dbReference type="FunCoup" id="Q9X242">
    <property type="interactions" value="244"/>
</dbReference>
<dbReference type="STRING" id="243274.TM_1717"/>
<dbReference type="DrugBank" id="DB04315">
    <property type="generic name" value="Guanosine-5'-Diphosphate"/>
</dbReference>
<dbReference type="PaxDb" id="243274-THEMA_05655"/>
<dbReference type="EnsemblBacteria" id="AAD36783">
    <property type="protein sequence ID" value="AAD36783"/>
    <property type="gene ID" value="TM_1717"/>
</dbReference>
<dbReference type="KEGG" id="tma:TM1717"/>
<dbReference type="KEGG" id="tmi:THEMA_05655"/>
<dbReference type="PATRIC" id="fig|243274.18.peg.1092"/>
<dbReference type="eggNOG" id="COG1162">
    <property type="taxonomic scope" value="Bacteria"/>
</dbReference>
<dbReference type="InParanoid" id="Q9X242"/>
<dbReference type="OrthoDB" id="9809485at2"/>
<dbReference type="EvolutionaryTrace" id="Q9X242"/>
<dbReference type="Proteomes" id="UP000008183">
    <property type="component" value="Chromosome"/>
</dbReference>
<dbReference type="GO" id="GO:0005737">
    <property type="term" value="C:cytoplasm"/>
    <property type="evidence" value="ECO:0007669"/>
    <property type="project" value="UniProtKB-SubCell"/>
</dbReference>
<dbReference type="GO" id="GO:0005525">
    <property type="term" value="F:GTP binding"/>
    <property type="evidence" value="ECO:0007669"/>
    <property type="project" value="UniProtKB-UniRule"/>
</dbReference>
<dbReference type="GO" id="GO:0003924">
    <property type="term" value="F:GTPase activity"/>
    <property type="evidence" value="ECO:0007669"/>
    <property type="project" value="UniProtKB-UniRule"/>
</dbReference>
<dbReference type="GO" id="GO:0046872">
    <property type="term" value="F:metal ion binding"/>
    <property type="evidence" value="ECO:0007669"/>
    <property type="project" value="UniProtKB-KW"/>
</dbReference>
<dbReference type="GO" id="GO:0019843">
    <property type="term" value="F:rRNA binding"/>
    <property type="evidence" value="ECO:0007669"/>
    <property type="project" value="UniProtKB-KW"/>
</dbReference>
<dbReference type="GO" id="GO:0042274">
    <property type="term" value="P:ribosomal small subunit biogenesis"/>
    <property type="evidence" value="ECO:0007669"/>
    <property type="project" value="UniProtKB-UniRule"/>
</dbReference>
<dbReference type="CDD" id="cd04466">
    <property type="entry name" value="S1_YloQ_GTPase"/>
    <property type="match status" value="1"/>
</dbReference>
<dbReference type="CDD" id="cd01854">
    <property type="entry name" value="YjeQ_EngC"/>
    <property type="match status" value="1"/>
</dbReference>
<dbReference type="Gene3D" id="2.40.50.140">
    <property type="entry name" value="Nucleic acid-binding proteins"/>
    <property type="match status" value="1"/>
</dbReference>
<dbReference type="Gene3D" id="3.40.50.300">
    <property type="entry name" value="P-loop containing nucleotide triphosphate hydrolases"/>
    <property type="match status" value="1"/>
</dbReference>
<dbReference type="Gene3D" id="1.10.40.50">
    <property type="entry name" value="Probable gtpase engc, domain 3"/>
    <property type="match status" value="1"/>
</dbReference>
<dbReference type="HAMAP" id="MF_01820">
    <property type="entry name" value="GTPase_RsgA"/>
    <property type="match status" value="1"/>
</dbReference>
<dbReference type="InterPro" id="IPR030378">
    <property type="entry name" value="G_CP_dom"/>
</dbReference>
<dbReference type="InterPro" id="IPR012340">
    <property type="entry name" value="NA-bd_OB-fold"/>
</dbReference>
<dbReference type="InterPro" id="IPR027417">
    <property type="entry name" value="P-loop_NTPase"/>
</dbReference>
<dbReference type="InterPro" id="IPR004881">
    <property type="entry name" value="Ribosome_biogen_GTPase_RsgA"/>
</dbReference>
<dbReference type="InterPro" id="IPR010914">
    <property type="entry name" value="RsgA_GTPase_dom"/>
</dbReference>
<dbReference type="InterPro" id="IPR031944">
    <property type="entry name" value="RsgA_N"/>
</dbReference>
<dbReference type="NCBIfam" id="TIGR00157">
    <property type="entry name" value="ribosome small subunit-dependent GTPase A"/>
    <property type="match status" value="1"/>
</dbReference>
<dbReference type="PANTHER" id="PTHR32120">
    <property type="entry name" value="SMALL RIBOSOMAL SUBUNIT BIOGENESIS GTPASE RSGA"/>
    <property type="match status" value="1"/>
</dbReference>
<dbReference type="PANTHER" id="PTHR32120:SF11">
    <property type="entry name" value="SMALL RIBOSOMAL SUBUNIT BIOGENESIS GTPASE RSGA 1, MITOCHONDRIAL-RELATED"/>
    <property type="match status" value="1"/>
</dbReference>
<dbReference type="Pfam" id="PF03193">
    <property type="entry name" value="RsgA_GTPase"/>
    <property type="match status" value="1"/>
</dbReference>
<dbReference type="Pfam" id="PF16745">
    <property type="entry name" value="RsgA_N"/>
    <property type="match status" value="1"/>
</dbReference>
<dbReference type="SUPFAM" id="SSF50249">
    <property type="entry name" value="Nucleic acid-binding proteins"/>
    <property type="match status" value="1"/>
</dbReference>
<dbReference type="SUPFAM" id="SSF52540">
    <property type="entry name" value="P-loop containing nucleoside triphosphate hydrolases"/>
    <property type="match status" value="1"/>
</dbReference>
<dbReference type="PROSITE" id="PS50936">
    <property type="entry name" value="ENGC_GTPASE"/>
    <property type="match status" value="1"/>
</dbReference>
<dbReference type="PROSITE" id="PS51721">
    <property type="entry name" value="G_CP"/>
    <property type="match status" value="1"/>
</dbReference>
<feature type="chain" id="PRO_0000171536" description="Small ribosomal subunit biogenesis GTPase RsgA">
    <location>
        <begin position="1"/>
        <end position="295"/>
    </location>
</feature>
<feature type="domain" description="CP-type G" evidence="2">
    <location>
        <begin position="68"/>
        <end position="228"/>
    </location>
</feature>
<feature type="binding site" evidence="1 4">
    <location>
        <begin position="117"/>
        <end position="120"/>
    </location>
    <ligand>
        <name>GTP</name>
        <dbReference type="ChEBI" id="CHEBI:37565"/>
    </ligand>
</feature>
<feature type="binding site" evidence="1 4">
    <location>
        <begin position="170"/>
        <end position="178"/>
    </location>
    <ligand>
        <name>GTP</name>
        <dbReference type="ChEBI" id="CHEBI:37565"/>
    </ligand>
</feature>
<feature type="binding site" evidence="1 3">
    <location>
        <position position="250"/>
    </location>
    <ligand>
        <name>Zn(2+)</name>
        <dbReference type="ChEBI" id="CHEBI:29105"/>
    </ligand>
</feature>
<feature type="binding site" evidence="1 3">
    <location>
        <position position="255"/>
    </location>
    <ligand>
        <name>Zn(2+)</name>
        <dbReference type="ChEBI" id="CHEBI:29105"/>
    </ligand>
</feature>
<feature type="binding site" evidence="3">
    <location>
        <position position="257"/>
    </location>
    <ligand>
        <name>Zn(2+)</name>
        <dbReference type="ChEBI" id="CHEBI:29105"/>
    </ligand>
</feature>
<feature type="binding site" evidence="1 3">
    <location>
        <position position="263"/>
    </location>
    <ligand>
        <name>Zn(2+)</name>
        <dbReference type="ChEBI" id="CHEBI:29105"/>
    </ligand>
</feature>
<feature type="strand" evidence="5">
    <location>
        <begin position="5"/>
        <end position="13"/>
    </location>
</feature>
<feature type="strand" evidence="5">
    <location>
        <begin position="16"/>
        <end position="21"/>
    </location>
</feature>
<feature type="turn" evidence="5">
    <location>
        <begin position="22"/>
        <end position="24"/>
    </location>
</feature>
<feature type="strand" evidence="5">
    <location>
        <begin position="27"/>
        <end position="32"/>
    </location>
</feature>
<feature type="helix" evidence="5">
    <location>
        <begin position="34"/>
        <end position="36"/>
    </location>
</feature>
<feature type="turn" evidence="5">
    <location>
        <begin position="37"/>
        <end position="40"/>
    </location>
</feature>
<feature type="strand" evidence="5">
    <location>
        <begin position="48"/>
        <end position="52"/>
    </location>
</feature>
<feature type="strand" evidence="5">
    <location>
        <begin position="56"/>
        <end position="64"/>
    </location>
</feature>
<feature type="turn" evidence="5">
    <location>
        <begin position="72"/>
        <end position="75"/>
    </location>
</feature>
<feature type="strand" evidence="5">
    <location>
        <begin position="76"/>
        <end position="78"/>
    </location>
</feature>
<feature type="strand" evidence="5">
    <location>
        <begin position="81"/>
        <end position="86"/>
    </location>
</feature>
<feature type="helix" evidence="5">
    <location>
        <begin position="95"/>
        <end position="107"/>
    </location>
</feature>
<feature type="strand" evidence="5">
    <location>
        <begin position="111"/>
        <end position="116"/>
    </location>
</feature>
<feature type="helix" evidence="5">
    <location>
        <begin position="119"/>
        <end position="121"/>
    </location>
</feature>
<feature type="helix" evidence="5">
    <location>
        <begin position="124"/>
        <end position="137"/>
    </location>
</feature>
<feature type="turn" evidence="5">
    <location>
        <begin position="138"/>
        <end position="140"/>
    </location>
</feature>
<feature type="strand" evidence="5">
    <location>
        <begin position="143"/>
        <end position="145"/>
    </location>
</feature>
<feature type="turn" evidence="5">
    <location>
        <begin position="148"/>
        <end position="150"/>
    </location>
</feature>
<feature type="helix" evidence="5">
    <location>
        <begin position="154"/>
        <end position="161"/>
    </location>
</feature>
<feature type="strand" evidence="5">
    <location>
        <begin position="162"/>
        <end position="169"/>
    </location>
</feature>
<feature type="helix" evidence="5">
    <location>
        <begin position="176"/>
        <end position="183"/>
    </location>
</feature>
<feature type="strand" evidence="5">
    <location>
        <begin position="210"/>
        <end position="212"/>
    </location>
</feature>
<feature type="strand" evidence="5">
    <location>
        <begin position="218"/>
        <end position="222"/>
    </location>
</feature>
<feature type="helix" evidence="5">
    <location>
        <begin position="235"/>
        <end position="238"/>
    </location>
</feature>
<feature type="helix" evidence="5">
    <location>
        <begin position="239"/>
        <end position="241"/>
    </location>
</feature>
<feature type="strand" evidence="5">
    <location>
        <begin position="245"/>
        <end position="247"/>
    </location>
</feature>
<feature type="strand" evidence="5">
    <location>
        <begin position="257"/>
        <end position="259"/>
    </location>
</feature>
<feature type="helix" evidence="5">
    <location>
        <begin position="264"/>
        <end position="271"/>
    </location>
</feature>
<feature type="helix" evidence="5">
    <location>
        <begin position="276"/>
        <end position="290"/>
    </location>
</feature>
<protein>
    <recommendedName>
        <fullName evidence="1">Small ribosomal subunit biogenesis GTPase RsgA</fullName>
        <ecNumber evidence="1">3.6.1.-</ecNumber>
    </recommendedName>
</protein>
<evidence type="ECO:0000255" key="1">
    <source>
        <dbReference type="HAMAP-Rule" id="MF_01820"/>
    </source>
</evidence>
<evidence type="ECO:0000255" key="2">
    <source>
        <dbReference type="PROSITE-ProRule" id="PRU01058"/>
    </source>
</evidence>
<evidence type="ECO:0000269" key="3">
    <source>
    </source>
</evidence>
<evidence type="ECO:0000305" key="4">
    <source>
    </source>
</evidence>
<evidence type="ECO:0007829" key="5">
    <source>
        <dbReference type="PDB" id="1U0L"/>
    </source>
</evidence>
<gene>
    <name evidence="1" type="primary">rsgA</name>
    <name type="synonym">yjeQ</name>
    <name type="ordered locus">TM_1717</name>
</gene>
<keyword id="KW-0002">3D-structure</keyword>
<keyword id="KW-0963">Cytoplasm</keyword>
<keyword id="KW-0342">GTP-binding</keyword>
<keyword id="KW-0378">Hydrolase</keyword>
<keyword id="KW-0479">Metal-binding</keyword>
<keyword id="KW-0547">Nucleotide-binding</keyword>
<keyword id="KW-1185">Reference proteome</keyword>
<keyword id="KW-0690">Ribosome biogenesis</keyword>
<keyword id="KW-0694">RNA-binding</keyword>
<keyword id="KW-0699">rRNA-binding</keyword>
<keyword id="KW-0862">Zinc</keyword>
<name>RSGA_THEMA</name>
<reference key="1">
    <citation type="journal article" date="1999" name="Nature">
        <title>Evidence for lateral gene transfer between Archaea and Bacteria from genome sequence of Thermotoga maritima.</title>
        <authorList>
            <person name="Nelson K.E."/>
            <person name="Clayton R.A."/>
            <person name="Gill S.R."/>
            <person name="Gwinn M.L."/>
            <person name="Dodson R.J."/>
            <person name="Haft D.H."/>
            <person name="Hickey E.K."/>
            <person name="Peterson J.D."/>
            <person name="Nelson W.C."/>
            <person name="Ketchum K.A."/>
            <person name="McDonald L.A."/>
            <person name="Utterback T.R."/>
            <person name="Malek J.A."/>
            <person name="Linher K.D."/>
            <person name="Garrett M.M."/>
            <person name="Stewart A.M."/>
            <person name="Cotton M.D."/>
            <person name="Pratt M.S."/>
            <person name="Phillips C.A."/>
            <person name="Richardson D.L."/>
            <person name="Heidelberg J.F."/>
            <person name="Sutton G.G."/>
            <person name="Fleischmann R.D."/>
            <person name="Eisen J.A."/>
            <person name="White O."/>
            <person name="Salzberg S.L."/>
            <person name="Smith H.O."/>
            <person name="Venter J.C."/>
            <person name="Fraser C.M."/>
        </authorList>
    </citation>
    <scope>NUCLEOTIDE SEQUENCE [LARGE SCALE GENOMIC DNA]</scope>
    <source>
        <strain>ATCC 43589 / DSM 3109 / JCM 10099 / NBRC 100826 / MSB8</strain>
    </source>
</reference>
<reference key="2">
    <citation type="journal article" date="2004" name="Proc. Natl. Acad. Sci. U.S.A.">
        <title>Crystal structure of YjeQ from Thermotoga maritima contains a circularly permuted GTPase domain.</title>
        <authorList>
            <person name="Shin D.H."/>
            <person name="Lou Y."/>
            <person name="Jancarik J."/>
            <person name="Yokota H."/>
            <person name="Kim R."/>
            <person name="Kim S.-H."/>
        </authorList>
    </citation>
    <scope>X-RAY CRYSTALLOGRAPHY (2.8 ANGSTROMS) IN COMPLEX WITH GDP AND ZINC IONS</scope>
    <scope>PROBABLE SUBUNIT</scope>
    <source>
        <strain>ATCC 43589 / DSM 3109 / JCM 10099 / NBRC 100826 / MSB8</strain>
    </source>
</reference>
<accession>Q9X242</accession>
<comment type="function">
    <text evidence="1">One of several proteins that assist in the late maturation steps of the functional core of the 30S ribosomal subunit. Helps release RbfA from mature subunits. May play a role in the assembly of ribosomal proteins into the subunit. Circularly permuted GTPase that catalyzes slow GTP hydrolysis, GTPase activity is stimulated by the 30S ribosomal subunit.</text>
</comment>
<comment type="cofactor">
    <cofactor evidence="1 3">
        <name>Zn(2+)</name>
        <dbReference type="ChEBI" id="CHEBI:29105"/>
    </cofactor>
    <text evidence="1 3">Binds 1 zinc ion per subunit.</text>
</comment>
<comment type="subunit">
    <text evidence="1 4">Monomer. Associates with 30S ribosomal subunit, binds 16S rRNA.</text>
</comment>
<comment type="subcellular location">
    <subcellularLocation>
        <location evidence="1">Cytoplasm</location>
    </subcellularLocation>
</comment>
<comment type="similarity">
    <text evidence="1">Belongs to the TRAFAC class YlqF/YawG GTPase family. RsgA subfamily.</text>
</comment>
<sequence>MNLRRRGIVVSFHSNMVTVEDEETGERILCKLRGKFRLQNLKIYVGDRVEYTPDETGSGVIENVLHRKNLLTKPHVANVDQVILVVTVKMPETSTYIIDKFLVLAEKNELETVMVINKMDLYDEDDLRKVRELEEIYSGLYPIVKTSAKTGMGIEELKEYLKGKISTMAGLSGVGKSSLLNAINPGLKLRVSEVSEKLQRGRHTTTTAQLLKFDFGGYVVDTPGFANLEINDIEPEELKHYFKEFGDKQCFFSDCNHVDEPECGVKEAVENGEIAESRYENYVKMFYELLGRRKK</sequence>
<proteinExistence type="evidence at protein level"/>